<comment type="interaction">
    <interactant intactId="EBI-25521013">
        <id>Q9FLZ8</id>
    </interactant>
    <interactant intactId="EBI-782514">
        <id>Q940H6</id>
        <label>SRK2E</label>
    </interactant>
    <organismsDiffer>false</organismsDiffer>
    <experiments>3</experiments>
</comment>
<proteinExistence type="evidence at protein level"/>
<organism>
    <name type="scientific">Arabidopsis thaliana</name>
    <name type="common">Mouse-ear cress</name>
    <dbReference type="NCBI Taxonomy" id="3702"/>
    <lineage>
        <taxon>Eukaryota</taxon>
        <taxon>Viridiplantae</taxon>
        <taxon>Streptophyta</taxon>
        <taxon>Embryophyta</taxon>
        <taxon>Tracheophyta</taxon>
        <taxon>Spermatophyta</taxon>
        <taxon>Magnoliopsida</taxon>
        <taxon>eudicotyledons</taxon>
        <taxon>Gunneridae</taxon>
        <taxon>Pentapetalae</taxon>
        <taxon>rosids</taxon>
        <taxon>malvids</taxon>
        <taxon>Brassicales</taxon>
        <taxon>Brassicaceae</taxon>
        <taxon>Camelineae</taxon>
        <taxon>Arabidopsis</taxon>
    </lineage>
</organism>
<feature type="chain" id="PRO_0000396018" description="EID1-like F-box protein 2">
    <location>
        <begin position="1"/>
        <end position="249"/>
    </location>
</feature>
<feature type="domain" description="F-box">
    <location>
        <begin position="16"/>
        <end position="68"/>
    </location>
</feature>
<accession>Q9FLZ8</accession>
<protein>
    <recommendedName>
        <fullName>EID1-like F-box protein 2</fullName>
    </recommendedName>
</protein>
<reference key="1">
    <citation type="journal article" date="1998" name="DNA Res.">
        <title>Structural analysis of Arabidopsis thaliana chromosome 5. IV. Sequence features of the regions of 1,456,315 bp covered by nineteen physically assigned P1 and TAC clones.</title>
        <authorList>
            <person name="Sato S."/>
            <person name="Kaneko T."/>
            <person name="Kotani H."/>
            <person name="Nakamura Y."/>
            <person name="Asamizu E."/>
            <person name="Miyajima N."/>
            <person name="Tabata S."/>
        </authorList>
    </citation>
    <scope>NUCLEOTIDE SEQUENCE [LARGE SCALE GENOMIC DNA]</scope>
    <source>
        <strain>cv. Columbia</strain>
    </source>
</reference>
<reference key="2">
    <citation type="journal article" date="2017" name="Plant J.">
        <title>Araport11: a complete reannotation of the Arabidopsis thaliana reference genome.</title>
        <authorList>
            <person name="Cheng C.Y."/>
            <person name="Krishnakumar V."/>
            <person name="Chan A.P."/>
            <person name="Thibaud-Nissen F."/>
            <person name="Schobel S."/>
            <person name="Town C.D."/>
        </authorList>
    </citation>
    <scope>GENOME REANNOTATION</scope>
    <source>
        <strain>cv. Columbia</strain>
    </source>
</reference>
<reference key="3">
    <citation type="journal article" date="2003" name="Science">
        <title>Empirical analysis of transcriptional activity in the Arabidopsis genome.</title>
        <authorList>
            <person name="Yamada K."/>
            <person name="Lim J."/>
            <person name="Dale J.M."/>
            <person name="Chen H."/>
            <person name="Shinn P."/>
            <person name="Palm C.J."/>
            <person name="Southwick A.M."/>
            <person name="Wu H.C."/>
            <person name="Kim C.J."/>
            <person name="Nguyen M."/>
            <person name="Pham P.K."/>
            <person name="Cheuk R.F."/>
            <person name="Karlin-Newmann G."/>
            <person name="Liu S.X."/>
            <person name="Lam B."/>
            <person name="Sakano H."/>
            <person name="Wu T."/>
            <person name="Yu G."/>
            <person name="Miranda M."/>
            <person name="Quach H.L."/>
            <person name="Tripp M."/>
            <person name="Chang C.H."/>
            <person name="Lee J.M."/>
            <person name="Toriumi M.J."/>
            <person name="Chan M.M."/>
            <person name="Tang C.C."/>
            <person name="Onodera C.S."/>
            <person name="Deng J.M."/>
            <person name="Akiyama K."/>
            <person name="Ansari Y."/>
            <person name="Arakawa T."/>
            <person name="Banh J."/>
            <person name="Banno F."/>
            <person name="Bowser L."/>
            <person name="Brooks S.Y."/>
            <person name="Carninci P."/>
            <person name="Chao Q."/>
            <person name="Choy N."/>
            <person name="Enju A."/>
            <person name="Goldsmith A.D."/>
            <person name="Gurjal M."/>
            <person name="Hansen N.F."/>
            <person name="Hayashizaki Y."/>
            <person name="Johnson-Hopson C."/>
            <person name="Hsuan V.W."/>
            <person name="Iida K."/>
            <person name="Karnes M."/>
            <person name="Khan S."/>
            <person name="Koesema E."/>
            <person name="Ishida J."/>
            <person name="Jiang P.X."/>
            <person name="Jones T."/>
            <person name="Kawai J."/>
            <person name="Kamiya A."/>
            <person name="Meyers C."/>
            <person name="Nakajima M."/>
            <person name="Narusaka M."/>
            <person name="Seki M."/>
            <person name="Sakurai T."/>
            <person name="Satou M."/>
            <person name="Tamse R."/>
            <person name="Vaysberg M."/>
            <person name="Wallender E.K."/>
            <person name="Wong C."/>
            <person name="Yamamura Y."/>
            <person name="Yuan S."/>
            <person name="Shinozaki K."/>
            <person name="Davis R.W."/>
            <person name="Theologis A."/>
            <person name="Ecker J.R."/>
        </authorList>
    </citation>
    <scope>NUCLEOTIDE SEQUENCE [LARGE SCALE MRNA]</scope>
    <source>
        <strain>cv. Columbia</strain>
    </source>
</reference>
<keyword id="KW-1185">Reference proteome</keyword>
<name>EDL2_ARATH</name>
<gene>
    <name type="primary">EDL2</name>
    <name type="ordered locus">At5g39360</name>
    <name type="ORF">MUL8.40</name>
</gene>
<dbReference type="EMBL" id="AB009054">
    <property type="protein sequence ID" value="BAB11010.1"/>
    <property type="molecule type" value="Genomic_DNA"/>
</dbReference>
<dbReference type="EMBL" id="CP002688">
    <property type="protein sequence ID" value="AED94424.1"/>
    <property type="molecule type" value="Genomic_DNA"/>
</dbReference>
<dbReference type="EMBL" id="AY075673">
    <property type="protein sequence ID" value="AAL77680.1"/>
    <property type="molecule type" value="mRNA"/>
</dbReference>
<dbReference type="EMBL" id="AY133632">
    <property type="protein sequence ID" value="AAM91462.1"/>
    <property type="molecule type" value="mRNA"/>
</dbReference>
<dbReference type="RefSeq" id="NP_198752.1">
    <property type="nucleotide sequence ID" value="NM_123298.5"/>
</dbReference>
<dbReference type="BioGRID" id="19183">
    <property type="interactions" value="1"/>
</dbReference>
<dbReference type="FunCoup" id="Q9FLZ8">
    <property type="interactions" value="2033"/>
</dbReference>
<dbReference type="IntAct" id="Q9FLZ8">
    <property type="interactions" value="1"/>
</dbReference>
<dbReference type="STRING" id="3702.Q9FLZ8"/>
<dbReference type="PaxDb" id="3702-AT5G39360.1"/>
<dbReference type="ProteomicsDB" id="222065"/>
<dbReference type="EnsemblPlants" id="AT5G39360.1">
    <property type="protein sequence ID" value="AT5G39360.1"/>
    <property type="gene ID" value="AT5G39360"/>
</dbReference>
<dbReference type="GeneID" id="833932"/>
<dbReference type="Gramene" id="AT5G39360.1">
    <property type="protein sequence ID" value="AT5G39360.1"/>
    <property type="gene ID" value="AT5G39360"/>
</dbReference>
<dbReference type="KEGG" id="ath:AT5G39360"/>
<dbReference type="Araport" id="AT5G39360"/>
<dbReference type="TAIR" id="AT5G39360">
    <property type="gene designation" value="EDL2"/>
</dbReference>
<dbReference type="eggNOG" id="ENOG502QQXG">
    <property type="taxonomic scope" value="Eukaryota"/>
</dbReference>
<dbReference type="HOGENOM" id="CLU_065460_0_0_1"/>
<dbReference type="InParanoid" id="Q9FLZ8"/>
<dbReference type="OMA" id="GTPFHPT"/>
<dbReference type="OrthoDB" id="1881056at2759"/>
<dbReference type="PhylomeDB" id="Q9FLZ8"/>
<dbReference type="PRO" id="PR:Q9FLZ8"/>
<dbReference type="Proteomes" id="UP000006548">
    <property type="component" value="Chromosome 5"/>
</dbReference>
<dbReference type="ExpressionAtlas" id="Q9FLZ8">
    <property type="expression patterns" value="baseline and differential"/>
</dbReference>
<dbReference type="InterPro" id="IPR040267">
    <property type="entry name" value="EID1-like"/>
</dbReference>
<dbReference type="InterPro" id="IPR036047">
    <property type="entry name" value="F-box-like_dom_sf"/>
</dbReference>
<dbReference type="PANTHER" id="PTHR31348:SF16">
    <property type="entry name" value="EID1-LIKE F-BOX PROTEIN 2"/>
    <property type="match status" value="1"/>
</dbReference>
<dbReference type="PANTHER" id="PTHR31348">
    <property type="entry name" value="EID1-LIKE F-BOX PROTEIN 2-RELATED"/>
    <property type="match status" value="1"/>
</dbReference>
<dbReference type="SUPFAM" id="SSF81383">
    <property type="entry name" value="F-box domain"/>
    <property type="match status" value="1"/>
</dbReference>
<sequence>MIIAKQYRCIHSATCHCTKGHLSEEVLFLMVQHLNWNPNVIATLSCVCKWFDDLAKRLLWKEFCRARAPKMMSDLQSSGSHSVDGSWRALGKLLIYCSGSSKGGLFNDVQISGHFVHRTRFSRTSGRSFLPPQCRTDDILYVSDPCEHLDQGEDGDLGFFRGIFKSFSMSKVRKLLIKKGTPFHPTEVCPYCKAKLWSMLQAKMIPQSASCRLGAYEDSIEYYVCLNGHMLGVCTLLPLSDSEGASEFQ</sequence>